<reference key="1">
    <citation type="journal article" date="2002" name="Lancet">
        <title>Genome and virulence determinants of high virulence community-acquired MRSA.</title>
        <authorList>
            <person name="Baba T."/>
            <person name="Takeuchi F."/>
            <person name="Kuroda M."/>
            <person name="Yuzawa H."/>
            <person name="Aoki K."/>
            <person name="Oguchi A."/>
            <person name="Nagai Y."/>
            <person name="Iwama N."/>
            <person name="Asano K."/>
            <person name="Naimi T."/>
            <person name="Kuroda H."/>
            <person name="Cui L."/>
            <person name="Yamamoto K."/>
            <person name="Hiramatsu K."/>
        </authorList>
    </citation>
    <scope>NUCLEOTIDE SEQUENCE [LARGE SCALE GENOMIC DNA]</scope>
    <source>
        <strain>MW2</strain>
    </source>
</reference>
<proteinExistence type="inferred from homology"/>
<name>MURA1_STAAW</name>
<dbReference type="EC" id="2.5.1.7" evidence="1"/>
<dbReference type="EMBL" id="BA000033">
    <property type="protein sequence ID" value="BAB95889.1"/>
    <property type="molecule type" value="Genomic_DNA"/>
</dbReference>
<dbReference type="RefSeq" id="WP_000358006.1">
    <property type="nucleotide sequence ID" value="NC_003923.1"/>
</dbReference>
<dbReference type="SMR" id="P84059"/>
<dbReference type="KEGG" id="sam:MW2024"/>
<dbReference type="HOGENOM" id="CLU_027387_0_0_9"/>
<dbReference type="UniPathway" id="UPA00219"/>
<dbReference type="GO" id="GO:0005737">
    <property type="term" value="C:cytoplasm"/>
    <property type="evidence" value="ECO:0007669"/>
    <property type="project" value="UniProtKB-SubCell"/>
</dbReference>
<dbReference type="GO" id="GO:0008760">
    <property type="term" value="F:UDP-N-acetylglucosamine 1-carboxyvinyltransferase activity"/>
    <property type="evidence" value="ECO:0007669"/>
    <property type="project" value="UniProtKB-UniRule"/>
</dbReference>
<dbReference type="GO" id="GO:0051301">
    <property type="term" value="P:cell division"/>
    <property type="evidence" value="ECO:0007669"/>
    <property type="project" value="UniProtKB-KW"/>
</dbReference>
<dbReference type="GO" id="GO:0071555">
    <property type="term" value="P:cell wall organization"/>
    <property type="evidence" value="ECO:0007669"/>
    <property type="project" value="UniProtKB-KW"/>
</dbReference>
<dbReference type="GO" id="GO:0009252">
    <property type="term" value="P:peptidoglycan biosynthetic process"/>
    <property type="evidence" value="ECO:0007669"/>
    <property type="project" value="UniProtKB-UniRule"/>
</dbReference>
<dbReference type="GO" id="GO:0008360">
    <property type="term" value="P:regulation of cell shape"/>
    <property type="evidence" value="ECO:0007669"/>
    <property type="project" value="UniProtKB-KW"/>
</dbReference>
<dbReference type="GO" id="GO:0019277">
    <property type="term" value="P:UDP-N-acetylgalactosamine biosynthetic process"/>
    <property type="evidence" value="ECO:0007669"/>
    <property type="project" value="InterPro"/>
</dbReference>
<dbReference type="CDD" id="cd01555">
    <property type="entry name" value="UdpNAET"/>
    <property type="match status" value="1"/>
</dbReference>
<dbReference type="FunFam" id="3.65.10.10:FF:000001">
    <property type="entry name" value="UDP-N-acetylglucosamine 1-carboxyvinyltransferase"/>
    <property type="match status" value="1"/>
</dbReference>
<dbReference type="Gene3D" id="3.65.10.10">
    <property type="entry name" value="Enolpyruvate transferase domain"/>
    <property type="match status" value="2"/>
</dbReference>
<dbReference type="HAMAP" id="MF_00111">
    <property type="entry name" value="MurA"/>
    <property type="match status" value="1"/>
</dbReference>
<dbReference type="InterPro" id="IPR001986">
    <property type="entry name" value="Enolpyruvate_Tfrase_dom"/>
</dbReference>
<dbReference type="InterPro" id="IPR036968">
    <property type="entry name" value="Enolpyruvate_Tfrase_sf"/>
</dbReference>
<dbReference type="InterPro" id="IPR050068">
    <property type="entry name" value="MurA_subfamily"/>
</dbReference>
<dbReference type="InterPro" id="IPR013792">
    <property type="entry name" value="RNA3'P_cycl/enolpyr_Trfase_a/b"/>
</dbReference>
<dbReference type="InterPro" id="IPR005750">
    <property type="entry name" value="UDP_GlcNAc_COvinyl_MurA"/>
</dbReference>
<dbReference type="NCBIfam" id="TIGR01072">
    <property type="entry name" value="murA"/>
    <property type="match status" value="1"/>
</dbReference>
<dbReference type="NCBIfam" id="NF006873">
    <property type="entry name" value="PRK09369.1"/>
    <property type="match status" value="1"/>
</dbReference>
<dbReference type="PANTHER" id="PTHR43783">
    <property type="entry name" value="UDP-N-ACETYLGLUCOSAMINE 1-CARBOXYVINYLTRANSFERASE"/>
    <property type="match status" value="1"/>
</dbReference>
<dbReference type="PANTHER" id="PTHR43783:SF1">
    <property type="entry name" value="UDP-N-ACETYLGLUCOSAMINE 1-CARBOXYVINYLTRANSFERASE"/>
    <property type="match status" value="1"/>
</dbReference>
<dbReference type="Pfam" id="PF00275">
    <property type="entry name" value="EPSP_synthase"/>
    <property type="match status" value="1"/>
</dbReference>
<dbReference type="SUPFAM" id="SSF55205">
    <property type="entry name" value="EPT/RTPC-like"/>
    <property type="match status" value="1"/>
</dbReference>
<evidence type="ECO:0000255" key="1">
    <source>
        <dbReference type="HAMAP-Rule" id="MF_00111"/>
    </source>
</evidence>
<sequence length="421" mass="44996">MDKIVIKGGNKLTGEVKVEGAKNAVLPILTASLLASDKPSKLVNVPALSDVETINNVLTTLNADVTYKKDENAVVVDATKTLNEEAPYEYVSKMRASILVMGPLLARLGHAIVALPGGCAIGSRPIEQHIKGFEALGAEIHLENGNIYANAKDGLKGTSIHLDFPSVGATQNIIMAASLAKGKTLIENAAKEPEIVDLANYINEMGGRITGAGTDTITINGVESLHGVEHAIIPDRIEAGTLLIAGAITRGDIFVRGAIKEHMASLVYKLEEMGVELDYQEDGIRVRAEGELQPVDIKTLPHPGFPTDMQSQMMALLLTANGHKVVTETVFENRFMHVAEFKRMNANINVEGRSAKLEGKSQLQGAQVKATDLRAAAALILAGLVADGKTSVTELTHLDRGYVDLHGKLKQLGADIERIND</sequence>
<keyword id="KW-0131">Cell cycle</keyword>
<keyword id="KW-0132">Cell division</keyword>
<keyword id="KW-0133">Cell shape</keyword>
<keyword id="KW-0961">Cell wall biogenesis/degradation</keyword>
<keyword id="KW-0963">Cytoplasm</keyword>
<keyword id="KW-0573">Peptidoglycan synthesis</keyword>
<keyword id="KW-0670">Pyruvate</keyword>
<keyword id="KW-0808">Transferase</keyword>
<gene>
    <name evidence="1" type="primary">murA1</name>
    <name type="synonym">murA</name>
    <name type="ordered locus">MW2024</name>
</gene>
<organism>
    <name type="scientific">Staphylococcus aureus (strain MW2)</name>
    <dbReference type="NCBI Taxonomy" id="196620"/>
    <lineage>
        <taxon>Bacteria</taxon>
        <taxon>Bacillati</taxon>
        <taxon>Bacillota</taxon>
        <taxon>Bacilli</taxon>
        <taxon>Bacillales</taxon>
        <taxon>Staphylococcaceae</taxon>
        <taxon>Staphylococcus</taxon>
    </lineage>
</organism>
<protein>
    <recommendedName>
        <fullName evidence="1">UDP-N-acetylglucosamine 1-carboxyvinyltransferase 1</fullName>
        <ecNumber evidence="1">2.5.1.7</ecNumber>
    </recommendedName>
    <alternativeName>
        <fullName evidence="1">Enoylpyruvate transferase 1</fullName>
    </alternativeName>
    <alternativeName>
        <fullName evidence="1">UDP-N-acetylglucosamine enolpyruvyl transferase 1</fullName>
        <shortName evidence="1">EPT 1</shortName>
    </alternativeName>
</protein>
<comment type="function">
    <text evidence="1">Cell wall formation. Adds enolpyruvyl to UDP-N-acetylglucosamine.</text>
</comment>
<comment type="catalytic activity">
    <reaction evidence="1">
        <text>phosphoenolpyruvate + UDP-N-acetyl-alpha-D-glucosamine = UDP-N-acetyl-3-O-(1-carboxyvinyl)-alpha-D-glucosamine + phosphate</text>
        <dbReference type="Rhea" id="RHEA:18681"/>
        <dbReference type="ChEBI" id="CHEBI:43474"/>
        <dbReference type="ChEBI" id="CHEBI:57705"/>
        <dbReference type="ChEBI" id="CHEBI:58702"/>
        <dbReference type="ChEBI" id="CHEBI:68483"/>
        <dbReference type="EC" id="2.5.1.7"/>
    </reaction>
</comment>
<comment type="pathway">
    <text evidence="1">Cell wall biogenesis; peptidoglycan biosynthesis.</text>
</comment>
<comment type="subcellular location">
    <subcellularLocation>
        <location evidence="1">Cytoplasm</location>
    </subcellularLocation>
</comment>
<comment type="similarity">
    <text evidence="1">Belongs to the EPSP synthase family. MurA subfamily.</text>
</comment>
<feature type="chain" id="PRO_0000178924" description="UDP-N-acetylglucosamine 1-carboxyvinyltransferase 1">
    <location>
        <begin position="1"/>
        <end position="421"/>
    </location>
</feature>
<feature type="active site" description="Proton donor" evidence="1">
    <location>
        <position position="119"/>
    </location>
</feature>
<feature type="binding site" evidence="1">
    <location>
        <begin position="22"/>
        <end position="23"/>
    </location>
    <ligand>
        <name>phosphoenolpyruvate</name>
        <dbReference type="ChEBI" id="CHEBI:58702"/>
    </ligand>
</feature>
<feature type="binding site" evidence="1">
    <location>
        <position position="95"/>
    </location>
    <ligand>
        <name>UDP-N-acetyl-alpha-D-glucosamine</name>
        <dbReference type="ChEBI" id="CHEBI:57705"/>
    </ligand>
</feature>
<feature type="binding site" evidence="1">
    <location>
        <begin position="124"/>
        <end position="128"/>
    </location>
    <ligand>
        <name>UDP-N-acetyl-alpha-D-glucosamine</name>
        <dbReference type="ChEBI" id="CHEBI:57705"/>
    </ligand>
</feature>
<feature type="binding site" evidence="1">
    <location>
        <position position="308"/>
    </location>
    <ligand>
        <name>UDP-N-acetyl-alpha-D-glucosamine</name>
        <dbReference type="ChEBI" id="CHEBI:57705"/>
    </ligand>
</feature>
<feature type="binding site" evidence="1">
    <location>
        <position position="330"/>
    </location>
    <ligand>
        <name>UDP-N-acetyl-alpha-D-glucosamine</name>
        <dbReference type="ChEBI" id="CHEBI:57705"/>
    </ligand>
</feature>
<feature type="modified residue" description="2-(S-cysteinyl)pyruvic acid O-phosphothioketal" evidence="1">
    <location>
        <position position="119"/>
    </location>
</feature>
<accession>P84059</accession>
<accession>Q931H4</accession>
<accession>Q99SF8</accession>